<gene>
    <name evidence="1" type="primary">mnmA</name>
    <name type="ordered locus">SSU98_2168</name>
</gene>
<protein>
    <recommendedName>
        <fullName evidence="1">tRNA-specific 2-thiouridylase MnmA</fullName>
        <ecNumber evidence="1">2.8.1.13</ecNumber>
    </recommendedName>
</protein>
<feature type="chain" id="PRO_0000349817" description="tRNA-specific 2-thiouridylase MnmA">
    <location>
        <begin position="1"/>
        <end position="374"/>
    </location>
</feature>
<feature type="region of interest" description="Interaction with target base in tRNA" evidence="1">
    <location>
        <begin position="99"/>
        <end position="101"/>
    </location>
</feature>
<feature type="region of interest" description="Interaction with tRNA" evidence="1">
    <location>
        <begin position="151"/>
        <end position="153"/>
    </location>
</feature>
<feature type="region of interest" description="Interaction with tRNA" evidence="1">
    <location>
        <begin position="313"/>
        <end position="314"/>
    </location>
</feature>
<feature type="active site" description="Nucleophile" evidence="1">
    <location>
        <position position="104"/>
    </location>
</feature>
<feature type="active site" description="Cysteine persulfide intermediate" evidence="1">
    <location>
        <position position="201"/>
    </location>
</feature>
<feature type="binding site" evidence="1">
    <location>
        <begin position="13"/>
        <end position="20"/>
    </location>
    <ligand>
        <name>ATP</name>
        <dbReference type="ChEBI" id="CHEBI:30616"/>
    </ligand>
</feature>
<feature type="binding site" evidence="1">
    <location>
        <position position="39"/>
    </location>
    <ligand>
        <name>ATP</name>
        <dbReference type="ChEBI" id="CHEBI:30616"/>
    </ligand>
</feature>
<feature type="binding site" evidence="1">
    <location>
        <position position="128"/>
    </location>
    <ligand>
        <name>ATP</name>
        <dbReference type="ChEBI" id="CHEBI:30616"/>
    </ligand>
</feature>
<feature type="site" description="Interaction with tRNA" evidence="1">
    <location>
        <position position="129"/>
    </location>
</feature>
<feature type="site" description="Interaction with tRNA" evidence="1">
    <location>
        <position position="345"/>
    </location>
</feature>
<feature type="disulfide bond" description="Alternate" evidence="1">
    <location>
        <begin position="104"/>
        <end position="201"/>
    </location>
</feature>
<comment type="function">
    <text evidence="1">Catalyzes the 2-thiolation of uridine at the wobble position (U34) of tRNA, leading to the formation of s(2)U34.</text>
</comment>
<comment type="catalytic activity">
    <reaction evidence="1">
        <text>S-sulfanyl-L-cysteinyl-[protein] + uridine(34) in tRNA + AH2 + ATP = 2-thiouridine(34) in tRNA + L-cysteinyl-[protein] + A + AMP + diphosphate + H(+)</text>
        <dbReference type="Rhea" id="RHEA:47032"/>
        <dbReference type="Rhea" id="RHEA-COMP:10131"/>
        <dbReference type="Rhea" id="RHEA-COMP:11726"/>
        <dbReference type="Rhea" id="RHEA-COMP:11727"/>
        <dbReference type="Rhea" id="RHEA-COMP:11728"/>
        <dbReference type="ChEBI" id="CHEBI:13193"/>
        <dbReference type="ChEBI" id="CHEBI:15378"/>
        <dbReference type="ChEBI" id="CHEBI:17499"/>
        <dbReference type="ChEBI" id="CHEBI:29950"/>
        <dbReference type="ChEBI" id="CHEBI:30616"/>
        <dbReference type="ChEBI" id="CHEBI:33019"/>
        <dbReference type="ChEBI" id="CHEBI:61963"/>
        <dbReference type="ChEBI" id="CHEBI:65315"/>
        <dbReference type="ChEBI" id="CHEBI:87170"/>
        <dbReference type="ChEBI" id="CHEBI:456215"/>
        <dbReference type="EC" id="2.8.1.13"/>
    </reaction>
</comment>
<comment type="subcellular location">
    <subcellularLocation>
        <location evidence="1">Cytoplasm</location>
    </subcellularLocation>
</comment>
<comment type="similarity">
    <text evidence="1">Belongs to the MnmA/TRMU family.</text>
</comment>
<comment type="sequence caution" evidence="2">
    <conflict type="erroneous initiation">
        <sequence resource="EMBL-CDS" id="ABP93326"/>
    </conflict>
</comment>
<accession>A4W4N7</accession>
<evidence type="ECO:0000255" key="1">
    <source>
        <dbReference type="HAMAP-Rule" id="MF_00144"/>
    </source>
</evidence>
<evidence type="ECO:0000305" key="2"/>
<keyword id="KW-0067">ATP-binding</keyword>
<keyword id="KW-0963">Cytoplasm</keyword>
<keyword id="KW-1015">Disulfide bond</keyword>
<keyword id="KW-0547">Nucleotide-binding</keyword>
<keyword id="KW-0694">RNA-binding</keyword>
<keyword id="KW-0808">Transferase</keyword>
<keyword id="KW-0819">tRNA processing</keyword>
<keyword id="KW-0820">tRNA-binding</keyword>
<dbReference type="EC" id="2.8.1.13" evidence="1"/>
<dbReference type="EMBL" id="CP000408">
    <property type="protein sequence ID" value="ABP93326.1"/>
    <property type="status" value="ALT_INIT"/>
    <property type="molecule type" value="Genomic_DNA"/>
</dbReference>
<dbReference type="SMR" id="A4W4N7"/>
<dbReference type="KEGG" id="ssv:SSU98_2168"/>
<dbReference type="HOGENOM" id="CLU_035188_1_0_9"/>
<dbReference type="GO" id="GO:0005737">
    <property type="term" value="C:cytoplasm"/>
    <property type="evidence" value="ECO:0007669"/>
    <property type="project" value="UniProtKB-SubCell"/>
</dbReference>
<dbReference type="GO" id="GO:0005524">
    <property type="term" value="F:ATP binding"/>
    <property type="evidence" value="ECO:0007669"/>
    <property type="project" value="UniProtKB-KW"/>
</dbReference>
<dbReference type="GO" id="GO:0000049">
    <property type="term" value="F:tRNA binding"/>
    <property type="evidence" value="ECO:0007669"/>
    <property type="project" value="UniProtKB-KW"/>
</dbReference>
<dbReference type="GO" id="GO:0103016">
    <property type="term" value="F:tRNA-uridine 2-sulfurtransferase activity"/>
    <property type="evidence" value="ECO:0007669"/>
    <property type="project" value="UniProtKB-EC"/>
</dbReference>
<dbReference type="GO" id="GO:0002143">
    <property type="term" value="P:tRNA wobble position uridine thiolation"/>
    <property type="evidence" value="ECO:0007669"/>
    <property type="project" value="TreeGrafter"/>
</dbReference>
<dbReference type="CDD" id="cd01998">
    <property type="entry name" value="MnmA_TRMU-like"/>
    <property type="match status" value="1"/>
</dbReference>
<dbReference type="FunFam" id="2.30.30.280:FF:000001">
    <property type="entry name" value="tRNA-specific 2-thiouridylase MnmA"/>
    <property type="match status" value="1"/>
</dbReference>
<dbReference type="FunFam" id="2.40.30.10:FF:000023">
    <property type="entry name" value="tRNA-specific 2-thiouridylase MnmA"/>
    <property type="match status" value="1"/>
</dbReference>
<dbReference type="FunFam" id="3.40.50.620:FF:000004">
    <property type="entry name" value="tRNA-specific 2-thiouridylase MnmA"/>
    <property type="match status" value="1"/>
</dbReference>
<dbReference type="Gene3D" id="2.30.30.280">
    <property type="entry name" value="Adenine nucleotide alpha hydrolases-like domains"/>
    <property type="match status" value="1"/>
</dbReference>
<dbReference type="Gene3D" id="3.40.50.620">
    <property type="entry name" value="HUPs"/>
    <property type="match status" value="1"/>
</dbReference>
<dbReference type="Gene3D" id="2.40.30.10">
    <property type="entry name" value="Translation factors"/>
    <property type="match status" value="1"/>
</dbReference>
<dbReference type="HAMAP" id="MF_00144">
    <property type="entry name" value="tRNA_thiouridyl_MnmA"/>
    <property type="match status" value="1"/>
</dbReference>
<dbReference type="InterPro" id="IPR004506">
    <property type="entry name" value="MnmA-like"/>
</dbReference>
<dbReference type="InterPro" id="IPR046885">
    <property type="entry name" value="MnmA-like_C"/>
</dbReference>
<dbReference type="InterPro" id="IPR046884">
    <property type="entry name" value="MnmA-like_central"/>
</dbReference>
<dbReference type="InterPro" id="IPR023382">
    <property type="entry name" value="MnmA-like_central_sf"/>
</dbReference>
<dbReference type="InterPro" id="IPR014729">
    <property type="entry name" value="Rossmann-like_a/b/a_fold"/>
</dbReference>
<dbReference type="NCBIfam" id="NF001138">
    <property type="entry name" value="PRK00143.1"/>
    <property type="match status" value="1"/>
</dbReference>
<dbReference type="NCBIfam" id="TIGR00420">
    <property type="entry name" value="trmU"/>
    <property type="match status" value="1"/>
</dbReference>
<dbReference type="PANTHER" id="PTHR11933:SF5">
    <property type="entry name" value="MITOCHONDRIAL TRNA-SPECIFIC 2-THIOURIDYLASE 1"/>
    <property type="match status" value="1"/>
</dbReference>
<dbReference type="PANTHER" id="PTHR11933">
    <property type="entry name" value="TRNA 5-METHYLAMINOMETHYL-2-THIOURIDYLATE -METHYLTRANSFERASE"/>
    <property type="match status" value="1"/>
</dbReference>
<dbReference type="Pfam" id="PF03054">
    <property type="entry name" value="tRNA_Me_trans"/>
    <property type="match status" value="1"/>
</dbReference>
<dbReference type="Pfam" id="PF20258">
    <property type="entry name" value="tRNA_Me_trans_C"/>
    <property type="match status" value="1"/>
</dbReference>
<dbReference type="Pfam" id="PF20259">
    <property type="entry name" value="tRNA_Me_trans_M"/>
    <property type="match status" value="1"/>
</dbReference>
<dbReference type="SUPFAM" id="SSF52402">
    <property type="entry name" value="Adenine nucleotide alpha hydrolases-like"/>
    <property type="match status" value="1"/>
</dbReference>
<sequence>MSIDNSKTRVVVGMSGGVDSSVTALLLKEQGYDVIGIFMKNWDDTDENGFCTATEDYKDVAAVADQIGIPYYSVNFEKEYWDRVFEYFLAEYRAGRTPNPDVMCNKEIKFKAFLDYAMNLGADYVATGHYAQVTRDEDGTVHMLRGADNGKDQTYFLSQLSQEQLQKTMFPLGHLQKPQVREIAERAGLATAKKKDSTGICFIGEKNFKEFLGQYLPAQPGRMMTVDGRDMGEHTGLMYYTIGQRGGLGIGGQIGGDNEPWFVVGKDLSKNILYVGQGFYHESLMSTSLQASQVHFTRDMPEEFTLECTAKFRYRQPDSQVTVKVKGDKAEVIFAEPQRAITPGQAVVFYDGQECLGGGMIDMAYKDGEACQYI</sequence>
<name>MNMA_STRS2</name>
<reference key="1">
    <citation type="journal article" date="2007" name="PLoS ONE">
        <title>A glimpse of streptococcal toxic shock syndrome from comparative genomics of S. suis 2 Chinese isolates.</title>
        <authorList>
            <person name="Chen C."/>
            <person name="Tang J."/>
            <person name="Dong W."/>
            <person name="Wang C."/>
            <person name="Feng Y."/>
            <person name="Wang J."/>
            <person name="Zheng F."/>
            <person name="Pan X."/>
            <person name="Liu D."/>
            <person name="Li M."/>
            <person name="Song Y."/>
            <person name="Zhu X."/>
            <person name="Sun H."/>
            <person name="Feng T."/>
            <person name="Guo Z."/>
            <person name="Ju A."/>
            <person name="Ge J."/>
            <person name="Dong Y."/>
            <person name="Sun W."/>
            <person name="Jiang Y."/>
            <person name="Wang J."/>
            <person name="Yan J."/>
            <person name="Yang H."/>
            <person name="Wang X."/>
            <person name="Gao G.F."/>
            <person name="Yang R."/>
            <person name="Wang J."/>
            <person name="Yu J."/>
        </authorList>
    </citation>
    <scope>NUCLEOTIDE SEQUENCE [LARGE SCALE GENOMIC DNA]</scope>
    <source>
        <strain>98HAH33</strain>
    </source>
</reference>
<organism>
    <name type="scientific">Streptococcus suis (strain 98HAH33)</name>
    <dbReference type="NCBI Taxonomy" id="391296"/>
    <lineage>
        <taxon>Bacteria</taxon>
        <taxon>Bacillati</taxon>
        <taxon>Bacillota</taxon>
        <taxon>Bacilli</taxon>
        <taxon>Lactobacillales</taxon>
        <taxon>Streptococcaceae</taxon>
        <taxon>Streptococcus</taxon>
    </lineage>
</organism>
<proteinExistence type="inferred from homology"/>